<reference key="1">
    <citation type="journal article" date="2004" name="Proc. Natl. Acad. Sci. U.S.A.">
        <title>Complete genomes of two clinical Staphylococcus aureus strains: evidence for the rapid evolution of virulence and drug resistance.</title>
        <authorList>
            <person name="Holden M.T.G."/>
            <person name="Feil E.J."/>
            <person name="Lindsay J.A."/>
            <person name="Peacock S.J."/>
            <person name="Day N.P.J."/>
            <person name="Enright M.C."/>
            <person name="Foster T.J."/>
            <person name="Moore C.E."/>
            <person name="Hurst L."/>
            <person name="Atkin R."/>
            <person name="Barron A."/>
            <person name="Bason N."/>
            <person name="Bentley S.D."/>
            <person name="Chillingworth C."/>
            <person name="Chillingworth T."/>
            <person name="Churcher C."/>
            <person name="Clark L."/>
            <person name="Corton C."/>
            <person name="Cronin A."/>
            <person name="Doggett J."/>
            <person name="Dowd L."/>
            <person name="Feltwell T."/>
            <person name="Hance Z."/>
            <person name="Harris B."/>
            <person name="Hauser H."/>
            <person name="Holroyd S."/>
            <person name="Jagels K."/>
            <person name="James K.D."/>
            <person name="Lennard N."/>
            <person name="Line A."/>
            <person name="Mayes R."/>
            <person name="Moule S."/>
            <person name="Mungall K."/>
            <person name="Ormond D."/>
            <person name="Quail M.A."/>
            <person name="Rabbinowitsch E."/>
            <person name="Rutherford K.M."/>
            <person name="Sanders M."/>
            <person name="Sharp S."/>
            <person name="Simmonds M."/>
            <person name="Stevens K."/>
            <person name="Whitehead S."/>
            <person name="Barrell B.G."/>
            <person name="Spratt B.G."/>
            <person name="Parkhill J."/>
        </authorList>
    </citation>
    <scope>NUCLEOTIDE SEQUENCE [LARGE SCALE GENOMIC DNA]</scope>
    <source>
        <strain>MSSA476</strain>
    </source>
</reference>
<organism>
    <name type="scientific">Staphylococcus aureus (strain MSSA476)</name>
    <dbReference type="NCBI Taxonomy" id="282459"/>
    <lineage>
        <taxon>Bacteria</taxon>
        <taxon>Bacillati</taxon>
        <taxon>Bacillota</taxon>
        <taxon>Bacilli</taxon>
        <taxon>Bacillales</taxon>
        <taxon>Staphylococcaceae</taxon>
        <taxon>Staphylococcus</taxon>
    </lineage>
</organism>
<feature type="chain" id="PRO_0000273039" description="Alcohol dehydrogenase">
    <location>
        <begin position="1"/>
        <end position="336"/>
    </location>
</feature>
<feature type="binding site" evidence="1">
    <location>
        <position position="37"/>
    </location>
    <ligand>
        <name>Zn(2+)</name>
        <dbReference type="ChEBI" id="CHEBI:29105"/>
        <label>1</label>
        <note>catalytic</note>
    </ligand>
</feature>
<feature type="binding site" evidence="1">
    <location>
        <position position="58"/>
    </location>
    <ligand>
        <name>Zn(2+)</name>
        <dbReference type="ChEBI" id="CHEBI:29105"/>
        <label>1</label>
        <note>catalytic</note>
    </ligand>
</feature>
<feature type="binding site" evidence="1">
    <location>
        <position position="89"/>
    </location>
    <ligand>
        <name>Zn(2+)</name>
        <dbReference type="ChEBI" id="CHEBI:29105"/>
        <label>2</label>
    </ligand>
</feature>
<feature type="binding site" evidence="1">
    <location>
        <position position="92"/>
    </location>
    <ligand>
        <name>Zn(2+)</name>
        <dbReference type="ChEBI" id="CHEBI:29105"/>
        <label>2</label>
    </ligand>
</feature>
<feature type="binding site" evidence="1">
    <location>
        <position position="95"/>
    </location>
    <ligand>
        <name>Zn(2+)</name>
        <dbReference type="ChEBI" id="CHEBI:29105"/>
        <label>2</label>
    </ligand>
</feature>
<feature type="binding site" evidence="1">
    <location>
        <position position="103"/>
    </location>
    <ligand>
        <name>Zn(2+)</name>
        <dbReference type="ChEBI" id="CHEBI:29105"/>
        <label>2</label>
    </ligand>
</feature>
<feature type="binding site" evidence="1">
    <location>
        <position position="145"/>
    </location>
    <ligand>
        <name>Zn(2+)</name>
        <dbReference type="ChEBI" id="CHEBI:29105"/>
        <label>1</label>
        <note>catalytic</note>
    </ligand>
</feature>
<keyword id="KW-0479">Metal-binding</keyword>
<keyword id="KW-0520">NAD</keyword>
<keyword id="KW-0560">Oxidoreductase</keyword>
<keyword id="KW-0862">Zinc</keyword>
<accession>Q6GBM4</accession>
<proteinExistence type="inferred from homology"/>
<gene>
    <name type="primary">adh</name>
    <name type="ordered locus">SAS0573</name>
</gene>
<evidence type="ECO:0000250" key="1"/>
<evidence type="ECO:0000305" key="2"/>
<name>ADH_STAAS</name>
<sequence length="336" mass="36048">MRAAVVTKDHKVSIEDKKLRALKPGEALVQTEYCGVCHTDLHVKNADFGDVTGVTLGHEGIGKVIEVAEDVESLKIGDRVSIAWMFESCGRCEYCTTGRETLCRSVKNAGYTVDGAMAEQVIVTADYAVKVPEKLDPAAASSITCAGVTTYKAVKVSNVKPGQWLGVFGIGGLGNLALQYAKNVMGAKIVAFDINDDKLAFAKELGADAIINSKDVDPVAEVMKLTDNKGLDATVVTSVAKTPFNQAVDVVKAGARVVAVGLPVDKMNLDIPRLVLDGIEVVGSLVGTRQDLREAFEFAAENKVTPKVQLRKLEEINDIFEEMENGTITGRMVIKF</sequence>
<protein>
    <recommendedName>
        <fullName>Alcohol dehydrogenase</fullName>
        <shortName>ADH</shortName>
        <ecNumber>1.1.1.1</ecNumber>
    </recommendedName>
</protein>
<dbReference type="EC" id="1.1.1.1"/>
<dbReference type="EMBL" id="BX571857">
    <property type="protein sequence ID" value="CAG42347.1"/>
    <property type="molecule type" value="Genomic_DNA"/>
</dbReference>
<dbReference type="SMR" id="Q6GBM4"/>
<dbReference type="KEGG" id="sas:SAS0573"/>
<dbReference type="HOGENOM" id="CLU_026673_20_1_9"/>
<dbReference type="GO" id="GO:0004022">
    <property type="term" value="F:alcohol dehydrogenase (NAD+) activity"/>
    <property type="evidence" value="ECO:0007669"/>
    <property type="project" value="UniProtKB-EC"/>
</dbReference>
<dbReference type="GO" id="GO:0008270">
    <property type="term" value="F:zinc ion binding"/>
    <property type="evidence" value="ECO:0007669"/>
    <property type="project" value="InterPro"/>
</dbReference>
<dbReference type="CDD" id="cd08297">
    <property type="entry name" value="CAD3"/>
    <property type="match status" value="1"/>
</dbReference>
<dbReference type="FunFam" id="3.40.50.720:FF:000039">
    <property type="entry name" value="Alcohol dehydrogenase AdhP"/>
    <property type="match status" value="1"/>
</dbReference>
<dbReference type="Gene3D" id="3.90.180.10">
    <property type="entry name" value="Medium-chain alcohol dehydrogenases, catalytic domain"/>
    <property type="match status" value="1"/>
</dbReference>
<dbReference type="Gene3D" id="3.40.50.720">
    <property type="entry name" value="NAD(P)-binding Rossmann-like Domain"/>
    <property type="match status" value="1"/>
</dbReference>
<dbReference type="InterPro" id="IPR013149">
    <property type="entry name" value="ADH-like_C"/>
</dbReference>
<dbReference type="InterPro" id="IPR013154">
    <property type="entry name" value="ADH-like_N"/>
</dbReference>
<dbReference type="InterPro" id="IPR002328">
    <property type="entry name" value="ADH_Zn_CS"/>
</dbReference>
<dbReference type="InterPro" id="IPR029752">
    <property type="entry name" value="D-isomer_DH_CS1"/>
</dbReference>
<dbReference type="InterPro" id="IPR011032">
    <property type="entry name" value="GroES-like_sf"/>
</dbReference>
<dbReference type="InterPro" id="IPR036291">
    <property type="entry name" value="NAD(P)-bd_dom_sf"/>
</dbReference>
<dbReference type="InterPro" id="IPR020843">
    <property type="entry name" value="PKS_ER"/>
</dbReference>
<dbReference type="NCBIfam" id="NF006940">
    <property type="entry name" value="PRK09422.1"/>
    <property type="match status" value="1"/>
</dbReference>
<dbReference type="PANTHER" id="PTHR42940">
    <property type="entry name" value="ALCOHOL DEHYDROGENASE 1-RELATED"/>
    <property type="match status" value="1"/>
</dbReference>
<dbReference type="PANTHER" id="PTHR42940:SF8">
    <property type="entry name" value="VACUOLAR PROTEIN SORTING-ASSOCIATED PROTEIN 11"/>
    <property type="match status" value="1"/>
</dbReference>
<dbReference type="Pfam" id="PF08240">
    <property type="entry name" value="ADH_N"/>
    <property type="match status" value="1"/>
</dbReference>
<dbReference type="Pfam" id="PF00107">
    <property type="entry name" value="ADH_zinc_N"/>
    <property type="match status" value="1"/>
</dbReference>
<dbReference type="SMART" id="SM00829">
    <property type="entry name" value="PKS_ER"/>
    <property type="match status" value="1"/>
</dbReference>
<dbReference type="SUPFAM" id="SSF50129">
    <property type="entry name" value="GroES-like"/>
    <property type="match status" value="1"/>
</dbReference>
<dbReference type="SUPFAM" id="SSF51735">
    <property type="entry name" value="NAD(P)-binding Rossmann-fold domains"/>
    <property type="match status" value="1"/>
</dbReference>
<dbReference type="PROSITE" id="PS00059">
    <property type="entry name" value="ADH_ZINC"/>
    <property type="match status" value="1"/>
</dbReference>
<comment type="catalytic activity">
    <reaction>
        <text>a primary alcohol + NAD(+) = an aldehyde + NADH + H(+)</text>
        <dbReference type="Rhea" id="RHEA:10736"/>
        <dbReference type="ChEBI" id="CHEBI:15378"/>
        <dbReference type="ChEBI" id="CHEBI:15734"/>
        <dbReference type="ChEBI" id="CHEBI:17478"/>
        <dbReference type="ChEBI" id="CHEBI:57540"/>
        <dbReference type="ChEBI" id="CHEBI:57945"/>
        <dbReference type="EC" id="1.1.1.1"/>
    </reaction>
</comment>
<comment type="catalytic activity">
    <reaction>
        <text>a secondary alcohol + NAD(+) = a ketone + NADH + H(+)</text>
        <dbReference type="Rhea" id="RHEA:10740"/>
        <dbReference type="ChEBI" id="CHEBI:15378"/>
        <dbReference type="ChEBI" id="CHEBI:17087"/>
        <dbReference type="ChEBI" id="CHEBI:35681"/>
        <dbReference type="ChEBI" id="CHEBI:57540"/>
        <dbReference type="ChEBI" id="CHEBI:57945"/>
        <dbReference type="EC" id="1.1.1.1"/>
    </reaction>
</comment>
<comment type="cofactor">
    <cofactor evidence="1">
        <name>Zn(2+)</name>
        <dbReference type="ChEBI" id="CHEBI:29105"/>
    </cofactor>
    <text evidence="1">Binds 2 Zn(2+) ions per subunit.</text>
</comment>
<comment type="similarity">
    <text evidence="2">Belongs to the zinc-containing alcohol dehydrogenase family.</text>
</comment>